<gene>
    <name type="primary">sst</name>
</gene>
<comment type="function">
    <text>Somatostatin inhibits the release of somatotropin.</text>
</comment>
<comment type="subcellular location">
    <subcellularLocation>
        <location>Secreted</location>
    </subcellularLocation>
</comment>
<comment type="similarity">
    <text evidence="2">Belongs to the somatostatin family.</text>
</comment>
<protein>
    <recommendedName>
        <fullName>Somatostatin</fullName>
    </recommendedName>
    <component>
        <recommendedName>
            <fullName>Somatostatin-34</fullName>
        </recommendedName>
    </component>
    <component>
        <recommendedName>
            <fullName>Somatostatin-14</fullName>
        </recommendedName>
    </component>
</protein>
<name>SMS_MYXGL</name>
<keyword id="KW-0165">Cleavage on pair of basic residues</keyword>
<keyword id="KW-0903">Direct protein sequencing</keyword>
<keyword id="KW-1015">Disulfide bond</keyword>
<keyword id="KW-0372">Hormone</keyword>
<keyword id="KW-0964">Secreted</keyword>
<organism>
    <name type="scientific">Myxine glutinosa</name>
    <name type="common">Atlantic hagfish</name>
    <dbReference type="NCBI Taxonomy" id="7769"/>
    <lineage>
        <taxon>Eukaryota</taxon>
        <taxon>Metazoa</taxon>
        <taxon>Chordata</taxon>
        <taxon>Craniata</taxon>
        <taxon>Vertebrata</taxon>
        <taxon>Cyclostomata</taxon>
        <taxon>Myxini</taxon>
        <taxon>Myxiniformes</taxon>
        <taxon>Myxinidae</taxon>
        <taxon>Myxininae</taxon>
        <taxon>Myxine</taxon>
    </lineage>
</organism>
<sequence>AVERPRQDGQVHEPPGRERKAGCKNFFWKTFTSC</sequence>
<proteinExistence type="evidence at protein level"/>
<evidence type="ECO:0000256" key="1">
    <source>
        <dbReference type="SAM" id="MobiDB-lite"/>
    </source>
</evidence>
<evidence type="ECO:0000305" key="2"/>
<accession>P19209</accession>
<dbReference type="PIR" id="A32271">
    <property type="entry name" value="A32271"/>
</dbReference>
<dbReference type="GO" id="GO:0005615">
    <property type="term" value="C:extracellular space"/>
    <property type="evidence" value="ECO:0007669"/>
    <property type="project" value="TreeGrafter"/>
</dbReference>
<dbReference type="GO" id="GO:0005179">
    <property type="term" value="F:hormone activity"/>
    <property type="evidence" value="ECO:0007669"/>
    <property type="project" value="UniProtKB-KW"/>
</dbReference>
<dbReference type="GO" id="GO:0030334">
    <property type="term" value="P:regulation of cell migration"/>
    <property type="evidence" value="ECO:0007669"/>
    <property type="project" value="TreeGrafter"/>
</dbReference>
<dbReference type="InterPro" id="IPR004250">
    <property type="entry name" value="Somatostatin"/>
</dbReference>
<dbReference type="InterPro" id="IPR018142">
    <property type="entry name" value="Somatostatin/Cortistatin_C"/>
</dbReference>
<dbReference type="PANTHER" id="PTHR10558">
    <property type="entry name" value="SOMATOSTATIN"/>
    <property type="match status" value="1"/>
</dbReference>
<dbReference type="PANTHER" id="PTHR10558:SF2">
    <property type="entry name" value="SOMATOSTATIN"/>
    <property type="match status" value="1"/>
</dbReference>
<dbReference type="Pfam" id="PF03002">
    <property type="entry name" value="Somatostatin"/>
    <property type="match status" value="1"/>
</dbReference>
<feature type="peptide" id="PRO_0000033137" description="Somatostatin-34">
    <location>
        <begin position="1"/>
        <end position="34"/>
    </location>
</feature>
<feature type="peptide" id="PRO_0000033138" description="Somatostatin-14">
    <location>
        <begin position="21"/>
        <end position="34"/>
    </location>
</feature>
<feature type="region of interest" description="Disordered" evidence="1">
    <location>
        <begin position="1"/>
        <end position="20"/>
    </location>
</feature>
<feature type="disulfide bond">
    <location>
        <begin position="23"/>
        <end position="34"/>
    </location>
</feature>
<feature type="non-terminal residue">
    <location>
        <position position="1"/>
    </location>
</feature>
<reference key="1">
    <citation type="journal article" date="1988" name="Endocrinology">
        <title>Primary structures of somatostatins from the islet organ of the hagfish suggest an anomalous pathway of posttranslational processing of prosomatostatin-1.</title>
        <authorList>
            <person name="Conlon J.M."/>
            <person name="Askensten U."/>
            <person name="Falkmer S."/>
            <person name="Thim L."/>
        </authorList>
    </citation>
    <scope>PROTEIN SEQUENCE</scope>
</reference>